<name>UNC79_CAEEL</name>
<proteinExistence type="predicted"/>
<organism>
    <name type="scientific">Caenorhabditis elegans</name>
    <dbReference type="NCBI Taxonomy" id="6239"/>
    <lineage>
        <taxon>Eukaryota</taxon>
        <taxon>Metazoa</taxon>
        <taxon>Ecdysozoa</taxon>
        <taxon>Nematoda</taxon>
        <taxon>Chromadorea</taxon>
        <taxon>Rhabditida</taxon>
        <taxon>Rhabditina</taxon>
        <taxon>Rhabditomorpha</taxon>
        <taxon>Rhabditoidea</taxon>
        <taxon>Rhabditidae</taxon>
        <taxon>Peloderinae</taxon>
        <taxon>Caenorhabditis</taxon>
    </lineage>
</organism>
<protein>
    <recommendedName>
        <fullName>Uncoordinated protein 79</fullName>
    </recommendedName>
</protein>
<reference key="1">
    <citation type="journal article" date="1998" name="Science">
        <title>Genome sequence of the nematode C. elegans: a platform for investigating biology.</title>
        <authorList>
            <consortium name="The C. elegans sequencing consortium"/>
        </authorList>
    </citation>
    <scope>NUCLEOTIDE SEQUENCE [LARGE SCALE GENOMIC DNA]</scope>
    <source>
        <strain>Bristol N2</strain>
    </source>
</reference>
<keyword id="KW-1185">Reference proteome</keyword>
<feature type="chain" id="PRO_0000065130" description="Uncoordinated protein 79">
    <location>
        <begin position="1"/>
        <end position="870"/>
    </location>
</feature>
<accession>P42173</accession>
<sequence>MCLLFNRVVDMENPERHTVYLVVSLFVTFLSNKNSTPTDEKANAKKQSLVFRHFNTLLGYSSTEKCFTIPPARLRKAAVCNAFISGLPEILDMNLHTGNQLLPTVAQLLIHLPSPQKLASDQNVTNYSLALLTQHTRHLWLQSLILILYKYRFDQLPVSEYIVRLIGIVVKTLQNQVHECSDAADQSAEIDTWDEIEDDDVARAELIRPESLTVTTIQEATPAAEGMVHIGAVCVMQPTIVEPEGLAPEPLIARKRSTAVQEVRRKKSAIEVVKKSCTLRCGHCNEAIEMFDEETISLCLIALETFLHREPSMAAPILFKILYTVTRLIDTPMYPWHSTEMFVPANSRSVAKQMLRVSLHHLSTSAICLQLFDTKIPRPDAFWSVVALSLADFPELSPVYFIQILMEDLEESWPGSVKLIMKNLAFYIVEIPTDMYNNPWKDLVGHLETFFKRYHSAISADNGITPTRAEIENVIIVMTHVFKVQTFSSSKSPVTLVEAFARWLSESLHSADVSLESLLGVCTACNRALIRERDKQCITRALVTELMQAIKFKVKLHESNYVTIANMILQDAGEDIEVPLLDDQFNTAASEAIRPFLFEVLDFIADLHVIAKLKKESNSDALGGDLKVKLAEAIAVEMSRSNARDCRTVIRFIPWLMSPPSVTQAAPSAFADSVTNVRVLSWLLLGALHANHSCLPVPIECSQHMADYIHFVLAGFADQSKQSVVHMSALFHAFHLCQLWTVYCERAATYSSTTAFAHLVDFWARVTPAILQLLSHSKVLADMVNLHFLNTIQALQQVNSALLCQLYSMWAPILTAYHSQIPNQLRMKLDSCQNQPSLEAPLVTEWLKKVRYKISQVELQTSAASPYYTV</sequence>
<gene>
    <name type="primary">unc-79</name>
    <name type="ORF">C03C10.6</name>
</gene>
<dbReference type="EMBL" id="Z38112">
    <property type="protein sequence ID" value="CAA86235.2"/>
    <property type="molecule type" value="Genomic_DNA"/>
</dbReference>
<dbReference type="EMBL" id="Z35637">
    <property type="protein sequence ID" value="CAA86235.2"/>
    <property type="status" value="JOINED"/>
    <property type="molecule type" value="Genomic_DNA"/>
</dbReference>
<dbReference type="PIR" id="T18878">
    <property type="entry name" value="T18878"/>
</dbReference>
<dbReference type="RefSeq" id="NP_001366699.1">
    <property type="nucleotide sequence ID" value="NM_001381816.2"/>
</dbReference>
<dbReference type="RefSeq" id="NP_497817.2">
    <property type="nucleotide sequence ID" value="NM_065416.6"/>
</dbReference>
<dbReference type="SMR" id="P42173"/>
<dbReference type="FunCoup" id="P42173">
    <property type="interactions" value="310"/>
</dbReference>
<dbReference type="STRING" id="6239.E03A3.6a.1"/>
<dbReference type="PaxDb" id="6239-E03A3.6a"/>
<dbReference type="EnsemblMetazoa" id="E03A3.6b.1">
    <property type="protein sequence ID" value="E03A3.6b.1"/>
    <property type="gene ID" value="WBGene00006811"/>
</dbReference>
<dbReference type="EnsemblMetazoa" id="E03A3.6b.2">
    <property type="protein sequence ID" value="E03A3.6b.2"/>
    <property type="gene ID" value="WBGene00006811"/>
</dbReference>
<dbReference type="EnsemblMetazoa" id="E03A3.6b.3">
    <property type="protein sequence ID" value="E03A3.6b.3"/>
    <property type="gene ID" value="WBGene00006811"/>
</dbReference>
<dbReference type="GeneID" id="3565180"/>
<dbReference type="AGR" id="WB:WBGene00006811"/>
<dbReference type="WormBase" id="C03C10.6">
    <property type="protein sequence ID" value="CE30720"/>
    <property type="gene ID" value="WBGene00006811"/>
    <property type="gene designation" value="unc-79"/>
</dbReference>
<dbReference type="eggNOG" id="KOG3685">
    <property type="taxonomic scope" value="Eukaryota"/>
</dbReference>
<dbReference type="eggNOG" id="KOG4820">
    <property type="taxonomic scope" value="Eukaryota"/>
</dbReference>
<dbReference type="GeneTree" id="ENSGT00390000011802"/>
<dbReference type="HOGENOM" id="CLU_000485_0_0_1"/>
<dbReference type="InParanoid" id="P42173"/>
<dbReference type="OrthoDB" id="6270916at2759"/>
<dbReference type="PRO" id="PR:P42173"/>
<dbReference type="Proteomes" id="UP000001940">
    <property type="component" value="Chromosome III"/>
</dbReference>
<dbReference type="Bgee" id="WBGene00006811">
    <property type="expression patterns" value="Expressed in larva and 3 other cell types or tissues"/>
</dbReference>
<dbReference type="ExpressionAtlas" id="P42173">
    <property type="expression patterns" value="baseline and differential"/>
</dbReference>
<dbReference type="GO" id="GO:0030424">
    <property type="term" value="C:axon"/>
    <property type="evidence" value="ECO:0000314"/>
    <property type="project" value="WormBase"/>
</dbReference>
<dbReference type="GO" id="GO:0040017">
    <property type="term" value="P:positive regulation of locomotion"/>
    <property type="evidence" value="ECO:0000316"/>
    <property type="project" value="WormBase"/>
</dbReference>
<dbReference type="GO" id="GO:0072347">
    <property type="term" value="P:response to anesthetic"/>
    <property type="evidence" value="ECO:0000315"/>
    <property type="project" value="UniProtKB"/>
</dbReference>
<dbReference type="GO" id="GO:0045471">
    <property type="term" value="P:response to ethanol"/>
    <property type="evidence" value="ECO:0000315"/>
    <property type="project" value="UniProtKB"/>
</dbReference>
<dbReference type="GO" id="GO:1901424">
    <property type="term" value="P:response to toluene"/>
    <property type="evidence" value="ECO:0000315"/>
    <property type="project" value="UniProtKB"/>
</dbReference>
<dbReference type="GO" id="GO:0009410">
    <property type="term" value="P:response to xenobiotic stimulus"/>
    <property type="evidence" value="ECO:0000315"/>
    <property type="project" value="WormBase"/>
</dbReference>
<dbReference type="InterPro" id="IPR024855">
    <property type="entry name" value="UNC79"/>
</dbReference>
<dbReference type="PANTHER" id="PTHR21696">
    <property type="entry name" value="PROTEIN UNC-79 HOMOLOG"/>
    <property type="match status" value="1"/>
</dbReference>
<dbReference type="PANTHER" id="PTHR21696:SF2">
    <property type="entry name" value="PROTEIN UNC-79 HOMOLOG"/>
    <property type="match status" value="1"/>
</dbReference>